<keyword id="KW-0133">Cell shape</keyword>
<keyword id="KW-0961">Cell wall biogenesis/degradation</keyword>
<keyword id="KW-0328">Glycosyltransferase</keyword>
<keyword id="KW-0378">Hydrolase</keyword>
<keyword id="KW-0573">Peptidoglycan synthesis</keyword>
<keyword id="KW-0732">Signal</keyword>
<keyword id="KW-0808">Transferase</keyword>
<proteinExistence type="inferred from homology"/>
<name>YAT5_FUSBL</name>
<accession>P05448</accession>
<organism>
    <name type="scientific">Fuscovulum blasticum</name>
    <name type="common">Rhodobacter blasticus</name>
    <name type="synonym">Rhodopseudomonas blastica</name>
    <dbReference type="NCBI Taxonomy" id="1075"/>
    <lineage>
        <taxon>Bacteria</taxon>
        <taxon>Pseudomonadati</taxon>
        <taxon>Pseudomonadota</taxon>
        <taxon>Alphaproteobacteria</taxon>
        <taxon>Rhodobacterales</taxon>
        <taxon>Paracoccaceae</taxon>
        <taxon>Pseudogemmobacter</taxon>
    </lineage>
</organism>
<dbReference type="EC" id="2.-.-.-"/>
<dbReference type="EMBL" id="Z00018">
    <property type="protein sequence ID" value="CAA77311.1"/>
    <property type="molecule type" value="Genomic_DNA"/>
</dbReference>
<dbReference type="PIR" id="S04670">
    <property type="entry name" value="S04670"/>
</dbReference>
<dbReference type="SMR" id="P05448"/>
<dbReference type="UniPathway" id="UPA00219"/>
<dbReference type="GO" id="GO:0005576">
    <property type="term" value="C:extracellular region"/>
    <property type="evidence" value="ECO:0007669"/>
    <property type="project" value="TreeGrafter"/>
</dbReference>
<dbReference type="GO" id="GO:0016757">
    <property type="term" value="F:glycosyltransferase activity"/>
    <property type="evidence" value="ECO:0007669"/>
    <property type="project" value="UniProtKB-KW"/>
</dbReference>
<dbReference type="GO" id="GO:0071972">
    <property type="term" value="F:peptidoglycan L,D-transpeptidase activity"/>
    <property type="evidence" value="ECO:0007669"/>
    <property type="project" value="TreeGrafter"/>
</dbReference>
<dbReference type="GO" id="GO:0071555">
    <property type="term" value="P:cell wall organization"/>
    <property type="evidence" value="ECO:0007669"/>
    <property type="project" value="UniProtKB-KW"/>
</dbReference>
<dbReference type="GO" id="GO:0018104">
    <property type="term" value="P:peptidoglycan-protein cross-linking"/>
    <property type="evidence" value="ECO:0007669"/>
    <property type="project" value="TreeGrafter"/>
</dbReference>
<dbReference type="GO" id="GO:0008360">
    <property type="term" value="P:regulation of cell shape"/>
    <property type="evidence" value="ECO:0007669"/>
    <property type="project" value="UniProtKB-KW"/>
</dbReference>
<dbReference type="CDD" id="cd16913">
    <property type="entry name" value="YkuD_like"/>
    <property type="match status" value="1"/>
</dbReference>
<dbReference type="Gene3D" id="2.40.440.10">
    <property type="entry name" value="L,D-transpeptidase catalytic domain-like"/>
    <property type="match status" value="1"/>
</dbReference>
<dbReference type="InterPro" id="IPR050979">
    <property type="entry name" value="LD-transpeptidase"/>
</dbReference>
<dbReference type="InterPro" id="IPR005490">
    <property type="entry name" value="LD_TPept_cat_dom"/>
</dbReference>
<dbReference type="InterPro" id="IPR006311">
    <property type="entry name" value="TAT_signal"/>
</dbReference>
<dbReference type="InterPro" id="IPR038063">
    <property type="entry name" value="Transpep_catalytic_dom"/>
</dbReference>
<dbReference type="PANTHER" id="PTHR30582">
    <property type="entry name" value="L,D-TRANSPEPTIDASE"/>
    <property type="match status" value="1"/>
</dbReference>
<dbReference type="PANTHER" id="PTHR30582:SF24">
    <property type="entry name" value="L,D-TRANSPEPTIDASE ERFK_SRFK-RELATED"/>
    <property type="match status" value="1"/>
</dbReference>
<dbReference type="Pfam" id="PF03734">
    <property type="entry name" value="YkuD"/>
    <property type="match status" value="1"/>
</dbReference>
<dbReference type="SUPFAM" id="SSF141523">
    <property type="entry name" value="L,D-transpeptidase catalytic domain-like"/>
    <property type="match status" value="1"/>
</dbReference>
<dbReference type="PROSITE" id="PS52029">
    <property type="entry name" value="LD_TPASE"/>
    <property type="match status" value="1"/>
</dbReference>
<dbReference type="PROSITE" id="PS51318">
    <property type="entry name" value="TAT"/>
    <property type="match status" value="1"/>
</dbReference>
<comment type="pathway">
    <text>Cell wall biogenesis; peptidoglycan biosynthesis.</text>
</comment>
<comment type="PTM">
    <text>Predicted to be exported by the Tat system. The position of the signal peptide cleavage has not been experimentally proven.</text>
</comment>
<comment type="similarity">
    <text evidence="3">Belongs to the YkuD family.</text>
</comment>
<sequence>MTDTLNRRAAMALGLASAAGAALATPALSQDAAPATVRNNVSGFQMHAWRDHFDSLGKPMLVADTFSRALHYWNAEGGDHRIFPTSVPISDDLTKRGYTEIVRKKEGPSWTPTPSQMARYPDWKPIGPGPDNPLGTHAMYLSWPAYIIHGTHDTRKIGRRSSDGCIGLYNEMIAELFQLCPVGTRVRVI</sequence>
<protein>
    <recommendedName>
        <fullName>Putative L,D-transpeptidase in ATP synthase subunits region ORF 5</fullName>
        <ecNumber>2.-.-.-</ecNumber>
    </recommendedName>
</protein>
<feature type="signal peptide" description="Tat-type signal" evidence="1">
    <location>
        <begin position="1"/>
        <end position="35"/>
    </location>
</feature>
<feature type="chain" id="PRO_0000066135" description="Putative L,D-transpeptidase in ATP synthase subunits region ORF 5">
    <location>
        <begin position="36"/>
        <end position="189"/>
    </location>
</feature>
<feature type="domain" description="L,D-TPase catalytic" evidence="2">
    <location>
        <begin position="59"/>
        <end position="189"/>
    </location>
</feature>
<feature type="active site" description="Proton donor/acceptor" evidence="2">
    <location>
        <position position="149"/>
    </location>
</feature>
<feature type="active site" description="Nucleophile" evidence="2">
    <location>
        <position position="165"/>
    </location>
</feature>
<reference key="1">
    <citation type="journal article" date="1984" name="J. Mol. Biol.">
        <title>Rhodopseudomonas blastica atp operon. Nucleotide sequence and transcription.</title>
        <authorList>
            <person name="Tybulewicz V.L.J."/>
            <person name="Falk G."/>
            <person name="Walker J.E."/>
        </authorList>
    </citation>
    <scope>NUCLEOTIDE SEQUENCE [GENOMIC DNA]</scope>
</reference>
<evidence type="ECO:0000255" key="1">
    <source>
        <dbReference type="PROSITE-ProRule" id="PRU00648"/>
    </source>
</evidence>
<evidence type="ECO:0000255" key="2">
    <source>
        <dbReference type="PROSITE-ProRule" id="PRU01373"/>
    </source>
</evidence>
<evidence type="ECO:0000305" key="3"/>